<feature type="chain" id="PRO_0000206875" description="Magnesium-chelatase subunit ChlI homolog">
    <location>
        <begin position="1"/>
        <end position="365"/>
    </location>
</feature>
<feature type="region of interest" description="Disordered" evidence="2">
    <location>
        <begin position="340"/>
        <end position="365"/>
    </location>
</feature>
<feature type="compositionally biased region" description="Basic and acidic residues" evidence="2">
    <location>
        <begin position="344"/>
        <end position="365"/>
    </location>
</feature>
<feature type="binding site" evidence="1">
    <location>
        <begin position="40"/>
        <end position="47"/>
    </location>
    <ligand>
        <name>ATP</name>
        <dbReference type="ChEBI" id="CHEBI:30616"/>
    </ligand>
</feature>
<protein>
    <recommendedName>
        <fullName>Magnesium-chelatase subunit ChlI homolog</fullName>
    </recommendedName>
</protein>
<name>Y911_METJA</name>
<organism>
    <name type="scientific">Methanocaldococcus jannaschii (strain ATCC 43067 / DSM 2661 / JAL-1 / JCM 10045 / NBRC 100440)</name>
    <name type="common">Methanococcus jannaschii</name>
    <dbReference type="NCBI Taxonomy" id="243232"/>
    <lineage>
        <taxon>Archaea</taxon>
        <taxon>Methanobacteriati</taxon>
        <taxon>Methanobacteriota</taxon>
        <taxon>Methanomada group</taxon>
        <taxon>Methanococci</taxon>
        <taxon>Methanococcales</taxon>
        <taxon>Methanocaldococcaceae</taxon>
        <taxon>Methanocaldococcus</taxon>
    </lineage>
</organism>
<reference key="1">
    <citation type="journal article" date="1996" name="Science">
        <title>Complete genome sequence of the methanogenic archaeon, Methanococcus jannaschii.</title>
        <authorList>
            <person name="Bult C.J."/>
            <person name="White O."/>
            <person name="Olsen G.J."/>
            <person name="Zhou L."/>
            <person name="Fleischmann R.D."/>
            <person name="Sutton G.G."/>
            <person name="Blake J.A."/>
            <person name="FitzGerald L.M."/>
            <person name="Clayton R.A."/>
            <person name="Gocayne J.D."/>
            <person name="Kerlavage A.R."/>
            <person name="Dougherty B.A."/>
            <person name="Tomb J.-F."/>
            <person name="Adams M.D."/>
            <person name="Reich C.I."/>
            <person name="Overbeek R."/>
            <person name="Kirkness E.F."/>
            <person name="Weinstock K.G."/>
            <person name="Merrick J.M."/>
            <person name="Glodek A."/>
            <person name="Scott J.L."/>
            <person name="Geoghagen N.S.M."/>
            <person name="Weidman J.F."/>
            <person name="Fuhrmann J.L."/>
            <person name="Nguyen D."/>
            <person name="Utterback T.R."/>
            <person name="Kelley J.M."/>
            <person name="Peterson J.D."/>
            <person name="Sadow P.W."/>
            <person name="Hanna M.C."/>
            <person name="Cotton M.D."/>
            <person name="Roberts K.M."/>
            <person name="Hurst M.A."/>
            <person name="Kaine B.P."/>
            <person name="Borodovsky M."/>
            <person name="Klenk H.-P."/>
            <person name="Fraser C.M."/>
            <person name="Smith H.O."/>
            <person name="Woese C.R."/>
            <person name="Venter J.C."/>
        </authorList>
    </citation>
    <scope>NUCLEOTIDE SEQUENCE [LARGE SCALE GENOMIC DNA]</scope>
    <source>
        <strain>ATCC 43067 / DSM 2661 / JAL-1 / JCM 10045 / NBRC 100440</strain>
    </source>
</reference>
<gene>
    <name type="ordered locus">MJ0911</name>
</gene>
<dbReference type="EMBL" id="L77117">
    <property type="protein sequence ID" value="AAB98913.1"/>
    <property type="molecule type" value="Genomic_DNA"/>
</dbReference>
<dbReference type="PIR" id="G64413">
    <property type="entry name" value="G64413"/>
</dbReference>
<dbReference type="SMR" id="Q58321"/>
<dbReference type="FunCoup" id="Q58321">
    <property type="interactions" value="32"/>
</dbReference>
<dbReference type="STRING" id="243232.MJ_0911"/>
<dbReference type="PaxDb" id="243232-MJ_0911"/>
<dbReference type="EnsemblBacteria" id="AAB98913">
    <property type="protein sequence ID" value="AAB98913"/>
    <property type="gene ID" value="MJ_0911"/>
</dbReference>
<dbReference type="KEGG" id="mja:MJ_0911"/>
<dbReference type="eggNOG" id="arCOG00438">
    <property type="taxonomic scope" value="Archaea"/>
</dbReference>
<dbReference type="HOGENOM" id="CLU_016684_0_2_2"/>
<dbReference type="InParanoid" id="Q58321"/>
<dbReference type="PhylomeDB" id="Q58321"/>
<dbReference type="Proteomes" id="UP000000805">
    <property type="component" value="Chromosome"/>
</dbReference>
<dbReference type="GO" id="GO:0005524">
    <property type="term" value="F:ATP binding"/>
    <property type="evidence" value="ECO:0007669"/>
    <property type="project" value="UniProtKB-KW"/>
</dbReference>
<dbReference type="GO" id="GO:0016887">
    <property type="term" value="F:ATP hydrolysis activity"/>
    <property type="evidence" value="ECO:0007669"/>
    <property type="project" value="InterPro"/>
</dbReference>
<dbReference type="CDD" id="cd00009">
    <property type="entry name" value="AAA"/>
    <property type="match status" value="1"/>
</dbReference>
<dbReference type="Gene3D" id="1.10.8.80">
    <property type="entry name" value="Magnesium chelatase subunit I, C-Terminal domain"/>
    <property type="match status" value="1"/>
</dbReference>
<dbReference type="Gene3D" id="3.40.50.300">
    <property type="entry name" value="P-loop containing nucleotide triphosphate hydrolases"/>
    <property type="match status" value="1"/>
</dbReference>
<dbReference type="InterPro" id="IPR003593">
    <property type="entry name" value="AAA+_ATPase"/>
</dbReference>
<dbReference type="InterPro" id="IPR045006">
    <property type="entry name" value="CHLI-like"/>
</dbReference>
<dbReference type="InterPro" id="IPR041628">
    <property type="entry name" value="ChlI/MoxR_AAA_lid"/>
</dbReference>
<dbReference type="InterPro" id="IPR000523">
    <property type="entry name" value="Mg_chelatse_chII-like_cat_dom"/>
</dbReference>
<dbReference type="InterPro" id="IPR027417">
    <property type="entry name" value="P-loop_NTPase"/>
</dbReference>
<dbReference type="PANTHER" id="PTHR32039">
    <property type="entry name" value="MAGNESIUM-CHELATASE SUBUNIT CHLI"/>
    <property type="match status" value="1"/>
</dbReference>
<dbReference type="PANTHER" id="PTHR32039:SF9">
    <property type="entry name" value="MAGNESIUM-CHELATASE SUBUNIT CHLI-2, CHLOROPLASTIC"/>
    <property type="match status" value="1"/>
</dbReference>
<dbReference type="Pfam" id="PF17863">
    <property type="entry name" value="AAA_lid_2"/>
    <property type="match status" value="1"/>
</dbReference>
<dbReference type="Pfam" id="PF01078">
    <property type="entry name" value="Mg_chelatase"/>
    <property type="match status" value="1"/>
</dbReference>
<dbReference type="PIRSF" id="PIRSF002849">
    <property type="entry name" value="AAA_ATPase_chaperone_MoxR_prd"/>
    <property type="match status" value="1"/>
</dbReference>
<dbReference type="SMART" id="SM00382">
    <property type="entry name" value="AAA"/>
    <property type="match status" value="1"/>
</dbReference>
<dbReference type="SUPFAM" id="SSF52540">
    <property type="entry name" value="P-loop containing nucleoside triphosphate hydrolases"/>
    <property type="match status" value="1"/>
</dbReference>
<proteinExistence type="inferred from homology"/>
<sequence length="365" mass="41677">MMIMQYIYPFTAIVGQEKMKKALILNAINPKIGGVLIRGEKGTAKSTAVRALADLLPEIEIVEGCPFNCDPNGNLCDICKEKKKRGELKTTKKKMKVVNLPIGATEDRVIGTLDIEKAIKEGIKALEPGILAEANRNILYIDEVNLLDDHIIDVLLDAAAMGWNIIEREGVKIKHPSRFILVGTMNPEEGELRPQILDRFGLMVDVEGLNDVKDRVEVIKRVEEFNENPEAFYKKFEEEQNKLRERIIKARELLNKVEISDDLLEFISKVCIELGIQTNRADITVVRTAKALAAYNGRTYVTIDDVKEAMELALPHRMRRKPFEPPQLNKEKLEQMINEFKQQNNKDNEEKEEHKDDDVKKNMMK</sequence>
<evidence type="ECO:0000255" key="1"/>
<evidence type="ECO:0000256" key="2">
    <source>
        <dbReference type="SAM" id="MobiDB-lite"/>
    </source>
</evidence>
<evidence type="ECO:0000305" key="3"/>
<accession>Q58321</accession>
<keyword id="KW-0067">ATP-binding</keyword>
<keyword id="KW-0547">Nucleotide-binding</keyword>
<keyword id="KW-1185">Reference proteome</keyword>
<comment type="similarity">
    <text evidence="3">Belongs to the Mg-chelatase subunits D/I family.</text>
</comment>